<name>DHA2_STAAM</name>
<sequence length="372" mass="40083">MKIGIPREIKNNENRVGLSPSGVHALVESGHTVLVETNAGSGSFFEDVDYKEAGAEIVAEQAKVWDVDMVIKVKEPLESEYTYFKEGLVLFTYLHLANEEKLTQALIDRKVISIAYETVQLPDRSSPLLSPMSEVAGRMSAQVGAEFLQKLNGGMGILLGGVPGVPKGKVTIIGGGQAGTNAAKIALGLGADVTILDVNPKRLQQLDDLFGGRVHTIMSNPLNIELYVKQSDLVIGAVLIPGAKAPRLVTEDMIKQMKNGSVIIDIAIDQGGIFETTDKITTHDDPTYIKHGVVHYAVANMPGAVPRTSTLALNNATLPYALMLANKGYREAFKSNQPLSLGLNTYKGHVTNKGVAEAFEMEYKSVEEALQL</sequence>
<accession>Q931P7</accession>
<comment type="function">
    <text evidence="1">May play a role in cell wall synthesis as L-alanine is an important constituent of the peptidoglycan layer.</text>
</comment>
<comment type="catalytic activity">
    <reaction>
        <text>L-alanine + NAD(+) + H2O = pyruvate + NH4(+) + NADH + H(+)</text>
        <dbReference type="Rhea" id="RHEA:18405"/>
        <dbReference type="ChEBI" id="CHEBI:15361"/>
        <dbReference type="ChEBI" id="CHEBI:15377"/>
        <dbReference type="ChEBI" id="CHEBI:15378"/>
        <dbReference type="ChEBI" id="CHEBI:28938"/>
        <dbReference type="ChEBI" id="CHEBI:57540"/>
        <dbReference type="ChEBI" id="CHEBI:57945"/>
        <dbReference type="ChEBI" id="CHEBI:57972"/>
        <dbReference type="EC" id="1.4.1.1"/>
    </reaction>
</comment>
<comment type="pathway">
    <text>Amino-acid degradation; L-alanine degradation via dehydrogenase pathway; NH(3) and pyruvate from L-alanine: step 1/1.</text>
</comment>
<comment type="similarity">
    <text evidence="3">Belongs to the AlaDH/PNT family.</text>
</comment>
<evidence type="ECO:0000250" key="1"/>
<evidence type="ECO:0000255" key="2"/>
<evidence type="ECO:0000305" key="3"/>
<proteinExistence type="inferred from homology"/>
<keyword id="KW-0520">NAD</keyword>
<keyword id="KW-0560">Oxidoreductase</keyword>
<dbReference type="EC" id="1.4.1.1"/>
<dbReference type="EMBL" id="BA000017">
    <property type="protein sequence ID" value="BAB57871.1"/>
    <property type="molecule type" value="Genomic_DNA"/>
</dbReference>
<dbReference type="RefSeq" id="WP_000690009.1">
    <property type="nucleotide sequence ID" value="NC_002758.2"/>
</dbReference>
<dbReference type="SMR" id="Q931P7"/>
<dbReference type="KEGG" id="sav:SAV1709"/>
<dbReference type="HOGENOM" id="CLU_003376_3_0_9"/>
<dbReference type="PhylomeDB" id="Q931P7"/>
<dbReference type="UniPathway" id="UPA00527">
    <property type="reaction ID" value="UER00585"/>
</dbReference>
<dbReference type="Proteomes" id="UP000002481">
    <property type="component" value="Chromosome"/>
</dbReference>
<dbReference type="GO" id="GO:0005886">
    <property type="term" value="C:plasma membrane"/>
    <property type="evidence" value="ECO:0007669"/>
    <property type="project" value="TreeGrafter"/>
</dbReference>
<dbReference type="GO" id="GO:0000286">
    <property type="term" value="F:alanine dehydrogenase activity"/>
    <property type="evidence" value="ECO:0007669"/>
    <property type="project" value="UniProtKB-EC"/>
</dbReference>
<dbReference type="GO" id="GO:0042853">
    <property type="term" value="P:L-alanine catabolic process"/>
    <property type="evidence" value="ECO:0007669"/>
    <property type="project" value="UniProtKB-UniPathway"/>
</dbReference>
<dbReference type="CDD" id="cd05305">
    <property type="entry name" value="L-AlaDH"/>
    <property type="match status" value="1"/>
</dbReference>
<dbReference type="FunFam" id="3.40.50.720:FF:000049">
    <property type="entry name" value="Alanine dehydrogenase"/>
    <property type="match status" value="1"/>
</dbReference>
<dbReference type="Gene3D" id="3.40.50.720">
    <property type="entry name" value="NAD(P)-binding Rossmann-like Domain"/>
    <property type="match status" value="2"/>
</dbReference>
<dbReference type="InterPro" id="IPR008141">
    <property type="entry name" value="Ala_DH"/>
</dbReference>
<dbReference type="InterPro" id="IPR008143">
    <property type="entry name" value="Ala_DH/PNT_CS2"/>
</dbReference>
<dbReference type="InterPro" id="IPR008142">
    <property type="entry name" value="AlaDH/PNT_CS1"/>
</dbReference>
<dbReference type="InterPro" id="IPR007886">
    <property type="entry name" value="AlaDH/PNT_N"/>
</dbReference>
<dbReference type="InterPro" id="IPR007698">
    <property type="entry name" value="AlaDH/PNT_NAD(H)-bd"/>
</dbReference>
<dbReference type="InterPro" id="IPR036291">
    <property type="entry name" value="NAD(P)-bd_dom_sf"/>
</dbReference>
<dbReference type="NCBIfam" id="TIGR00518">
    <property type="entry name" value="alaDH"/>
    <property type="match status" value="1"/>
</dbReference>
<dbReference type="PANTHER" id="PTHR42795">
    <property type="entry name" value="ALANINE DEHYDROGENASE"/>
    <property type="match status" value="1"/>
</dbReference>
<dbReference type="PANTHER" id="PTHR42795:SF1">
    <property type="entry name" value="ALANINE DEHYDROGENASE"/>
    <property type="match status" value="1"/>
</dbReference>
<dbReference type="Pfam" id="PF01262">
    <property type="entry name" value="AlaDh_PNT_C"/>
    <property type="match status" value="1"/>
</dbReference>
<dbReference type="Pfam" id="PF05222">
    <property type="entry name" value="AlaDh_PNT_N"/>
    <property type="match status" value="1"/>
</dbReference>
<dbReference type="PIRSF" id="PIRSF000183">
    <property type="entry name" value="Alanine_dh"/>
    <property type="match status" value="1"/>
</dbReference>
<dbReference type="SMART" id="SM01002">
    <property type="entry name" value="AlaDh_PNT_C"/>
    <property type="match status" value="1"/>
</dbReference>
<dbReference type="SMART" id="SM01003">
    <property type="entry name" value="AlaDh_PNT_N"/>
    <property type="match status" value="1"/>
</dbReference>
<dbReference type="SUPFAM" id="SSF52283">
    <property type="entry name" value="Formate/glycerate dehydrogenase catalytic domain-like"/>
    <property type="match status" value="1"/>
</dbReference>
<dbReference type="SUPFAM" id="SSF51735">
    <property type="entry name" value="NAD(P)-binding Rossmann-fold domains"/>
    <property type="match status" value="1"/>
</dbReference>
<dbReference type="PROSITE" id="PS00836">
    <property type="entry name" value="ALADH_PNT_1"/>
    <property type="match status" value="1"/>
</dbReference>
<dbReference type="PROSITE" id="PS00837">
    <property type="entry name" value="ALADH_PNT_2"/>
    <property type="match status" value="1"/>
</dbReference>
<gene>
    <name type="primary">ald2</name>
    <name type="ordered locus">SAV1709</name>
</gene>
<feature type="chain" id="PRO_0000199002" description="Alanine dehydrogenase 2">
    <location>
        <begin position="1"/>
        <end position="372"/>
    </location>
</feature>
<feature type="active site" evidence="2">
    <location>
        <position position="95"/>
    </location>
</feature>
<feature type="binding site" evidence="1">
    <location>
        <begin position="169"/>
        <end position="199"/>
    </location>
    <ligand>
        <name>NAD(+)</name>
        <dbReference type="ChEBI" id="CHEBI:57540"/>
    </ligand>
</feature>
<reference key="1">
    <citation type="journal article" date="2001" name="Lancet">
        <title>Whole genome sequencing of meticillin-resistant Staphylococcus aureus.</title>
        <authorList>
            <person name="Kuroda M."/>
            <person name="Ohta T."/>
            <person name="Uchiyama I."/>
            <person name="Baba T."/>
            <person name="Yuzawa H."/>
            <person name="Kobayashi I."/>
            <person name="Cui L."/>
            <person name="Oguchi A."/>
            <person name="Aoki K."/>
            <person name="Nagai Y."/>
            <person name="Lian J.-Q."/>
            <person name="Ito T."/>
            <person name="Kanamori M."/>
            <person name="Matsumaru H."/>
            <person name="Maruyama A."/>
            <person name="Murakami H."/>
            <person name="Hosoyama A."/>
            <person name="Mizutani-Ui Y."/>
            <person name="Takahashi N.K."/>
            <person name="Sawano T."/>
            <person name="Inoue R."/>
            <person name="Kaito C."/>
            <person name="Sekimizu K."/>
            <person name="Hirakawa H."/>
            <person name="Kuhara S."/>
            <person name="Goto S."/>
            <person name="Yabuzaki J."/>
            <person name="Kanehisa M."/>
            <person name="Yamashita A."/>
            <person name="Oshima K."/>
            <person name="Furuya K."/>
            <person name="Yoshino C."/>
            <person name="Shiba T."/>
            <person name="Hattori M."/>
            <person name="Ogasawara N."/>
            <person name="Hayashi H."/>
            <person name="Hiramatsu K."/>
        </authorList>
    </citation>
    <scope>NUCLEOTIDE SEQUENCE [LARGE SCALE GENOMIC DNA]</scope>
    <source>
        <strain>Mu50 / ATCC 700699</strain>
    </source>
</reference>
<protein>
    <recommendedName>
        <fullName>Alanine dehydrogenase 2</fullName>
        <ecNumber>1.4.1.1</ecNumber>
    </recommendedName>
</protein>
<organism>
    <name type="scientific">Staphylococcus aureus (strain Mu50 / ATCC 700699)</name>
    <dbReference type="NCBI Taxonomy" id="158878"/>
    <lineage>
        <taxon>Bacteria</taxon>
        <taxon>Bacillati</taxon>
        <taxon>Bacillota</taxon>
        <taxon>Bacilli</taxon>
        <taxon>Bacillales</taxon>
        <taxon>Staphylococcaceae</taxon>
        <taxon>Staphylococcus</taxon>
    </lineage>
</organism>